<organism>
    <name type="scientific">Chlamydia pneumoniae</name>
    <name type="common">Chlamydophila pneumoniae</name>
    <dbReference type="NCBI Taxonomy" id="83558"/>
    <lineage>
        <taxon>Bacteria</taxon>
        <taxon>Pseudomonadati</taxon>
        <taxon>Chlamydiota</taxon>
        <taxon>Chlamydiia</taxon>
        <taxon>Chlamydiales</taxon>
        <taxon>Chlamydiaceae</taxon>
        <taxon>Chlamydia/Chlamydophila group</taxon>
        <taxon>Chlamydia</taxon>
    </lineage>
</organism>
<proteinExistence type="evidence at transcript level"/>
<keyword id="KW-0998">Cell outer membrane</keyword>
<keyword id="KW-0134">Cell wall</keyword>
<keyword id="KW-0472">Membrane</keyword>
<keyword id="KW-0964">Secreted</keyword>
<keyword id="KW-0732">Signal</keyword>
<keyword id="KW-0812">Transmembrane</keyword>
<keyword id="KW-1134">Transmembrane beta strand</keyword>
<gene>
    <name type="primary">pmp21</name>
    <name type="ordered locus">CPn_0963</name>
    <name type="ordered locus">CP_0897</name>
    <name type="ordered locus">CpB1000</name>
</gene>
<protein>
    <recommendedName>
        <fullName>Probable outer membrane protein pmp21</fullName>
    </recommendedName>
    <alternativeName>
        <fullName>Polymorphic membrane protein 21</fullName>
    </alternativeName>
</protein>
<reference key="1">
    <citation type="journal article" date="1999" name="Nat. Genet.">
        <title>Comparative genomes of Chlamydia pneumoniae and C. trachomatis.</title>
        <authorList>
            <person name="Kalman S."/>
            <person name="Mitchell W.P."/>
            <person name="Marathe R."/>
            <person name="Lammel C.J."/>
            <person name="Fan J."/>
            <person name="Hyman R.W."/>
            <person name="Olinger L."/>
            <person name="Grimwood J."/>
            <person name="Davis R.W."/>
            <person name="Stephens R.S."/>
        </authorList>
    </citation>
    <scope>NUCLEOTIDE SEQUENCE [LARGE SCALE GENOMIC DNA]</scope>
    <source>
        <strain>CWL029</strain>
    </source>
</reference>
<reference key="2">
    <citation type="journal article" date="2000" name="Nucleic Acids Res.">
        <title>Genome sequences of Chlamydia trachomatis MoPn and Chlamydia pneumoniae AR39.</title>
        <authorList>
            <person name="Read T.D."/>
            <person name="Brunham R.C."/>
            <person name="Shen C."/>
            <person name="Gill S.R."/>
            <person name="Heidelberg J.F."/>
            <person name="White O."/>
            <person name="Hickey E.K."/>
            <person name="Peterson J.D."/>
            <person name="Utterback T.R."/>
            <person name="Berry K.J."/>
            <person name="Bass S."/>
            <person name="Linher K.D."/>
            <person name="Weidman J.F."/>
            <person name="Khouri H.M."/>
            <person name="Craven B."/>
            <person name="Bowman C."/>
            <person name="Dodson R.J."/>
            <person name="Gwinn M.L."/>
            <person name="Nelson W.C."/>
            <person name="DeBoy R.T."/>
            <person name="Kolonay J.F."/>
            <person name="McClarty G."/>
            <person name="Salzberg S.L."/>
            <person name="Eisen J.A."/>
            <person name="Fraser C.M."/>
        </authorList>
    </citation>
    <scope>NUCLEOTIDE SEQUENCE [LARGE SCALE GENOMIC DNA]</scope>
    <source>
        <strain>AR39</strain>
    </source>
</reference>
<reference key="3">
    <citation type="journal article" date="2000" name="Nucleic Acids Res.">
        <title>Comparison of whole genome sequences of Chlamydia pneumoniae J138 from Japan and CWL029 from USA.</title>
        <authorList>
            <person name="Shirai M."/>
            <person name="Hirakawa H."/>
            <person name="Kimoto M."/>
            <person name="Tabuchi M."/>
            <person name="Kishi F."/>
            <person name="Ouchi K."/>
            <person name="Shiba T."/>
            <person name="Ishii K."/>
            <person name="Hattori M."/>
            <person name="Kuhara S."/>
            <person name="Nakazawa T."/>
        </authorList>
    </citation>
    <scope>NUCLEOTIDE SEQUENCE [LARGE SCALE GENOMIC DNA]</scope>
    <source>
        <strain>J138</strain>
    </source>
</reference>
<reference key="4">
    <citation type="submission" date="2002-05" db="EMBL/GenBank/DDBJ databases">
        <title>The genome sequence of Chlamydia pneumoniae TW183 and comparison with other Chlamydia strains based on whole genome sequence analysis.</title>
        <authorList>
            <person name="Geng M.M."/>
            <person name="Schuhmacher A."/>
            <person name="Muehldorfer I."/>
            <person name="Bensch K.W."/>
            <person name="Schaefer K.P."/>
            <person name="Schneider S."/>
            <person name="Pohl T."/>
            <person name="Essig A."/>
            <person name="Marre R."/>
            <person name="Melchers K."/>
        </authorList>
    </citation>
    <scope>NUCLEOTIDE SEQUENCE [LARGE SCALE GENOMIC DNA]</scope>
    <source>
        <strain>TW-183</strain>
    </source>
</reference>
<accession>Q9Z6U5</accession>
<accession>Q9RB58</accession>
<name>PMP21_CHLPN</name>
<sequence length="1609" mass="170866">MVAKKTVRSYRSSFSHSVIVAILSAGIAFEAHSLHSSELDLGVFNKQFEEHSAHVEEAQTSVLKGSDPVNPSQKESEKVLYTQVPLTQGSSGESLDLADANFLEHFQHLFEETTVFGIDQKLVWSDLDTRNFSQPTQEPDTSNAVSEKISSDTKENRKDLETEDPSKKSGLKEVSSDLPKSPETAVAAISEDLEISENISARDPLQGLAFFYKNTSSQSISEKDSSFQGIIFSGSGANSGLGFENLKAPKSGAAVYSDRDIVFENLVKGLSFISCESLEDGSAAGVNIVVTHCGDVTLTDCATGLDLEALRLVKDFSRGGAVFTARNHEVQNNLAGGILSVVGNKGAIVVEKNSAEKSNGGAFACGSFVYSNNENTALWKENQALSGGAISSASDIDIQGNCSAIEFSGNQSLIALGEHIGLTDFVGGGALAAQGTLTLRNNAVVQCVKNTSKTHGGAILAGTVDLNETISEVAFKQNTAALTGGALSANDKVIIANNFGEILFEQNEVRNHGGAIYCGCRSNPKLEQKDSGENINIIGNSGAITFLKNKASVLEVMTQAEDYAGGGALWGHNVLLDSNSGNIQFIGNIGGSTFWIGEYVGGGAILSTDRVTISNNSGDVVFKGNKGQCLAQKYVAPQETAPVESDASSTNKDEKSLNACSHGDHYPPKTVEEEVPPSLLEEHPVVSSTDIRGGGAILAQHIFITDNTGNLRFSGNLGGGEESSTVGDLAIVGGGALLSTNEVNVCSNQNVVFSDNVTSNGCDSGGAILAKKVDISANHSVEFVSNGSGKFGGAVCALNESVNITDNGSAVSFSKNRTRLGGAGVAAPQGSVTICGNQGNIAFKENFVFGSENQRSGGGAIIANSSVNIQDNAGDILFVSNSTGSYGGAIFVGSLVASEGSNPRTLTITGNSGDILFAKNSTQTAASLSEKDSFGGGAIYTQNLKIVKNAGNVSFYGNRAPSGAGVQIADGGTVCLEAFGGDILFEGNINFDGSFNAIHLCGNDSKIVELSAVQDKNIIFQDAITYEENTIRGLPDKDVSPLSAPSLIFNSKPQDDSAQHHEGTIRFSRGVSKIPQIAAIQEGTLALSQNAELWLAGLKQETGSSIVLSAGSILRIFDSQVDSSAPLPTENKEETLVSAGVQINMSSPTPNKDKAVDTPVLADIISITVDLSSFVPEQDGTLPLPPEIIIPKGTKLHSNAIDLKIIDPTNVGYENHALLSSHKDIPLISLKTAEGMTGTPTADASLSNIKIDVSLPSITPATYGHTGVWSESKMEDGRLVVGWQPTGYKLNPEKQGALVLNNLWSHYTDLRALKQEIFAHHTIAQRMELDFSTNVWGSGLGVVEDCQNIGEFDGFKHHLTGYALGLDTQLVEDFLIGGCFSQFFGKTESQSYKAKNDVKSYMGAAYAGILAGPWLIKGAFVYGNINNDLTTDYGTLGISTGSWIGKGFIAGTSIDYRYIVNPRRFISAIVSTVVPFVEAEYVRIDLPEISEQGKEVRTFQKTRFENVAIPFGFALEHAYSRGSRAEVNSVQLAYVFDVYRKGPVSLITLKDAAYSWKSYGVDIPCKAWKARLSNNTEWNSYLSTYLAFNYEWREDLIAYDFNGGIRIIF</sequence>
<evidence type="ECO:0000255" key="1"/>
<evidence type="ECO:0000255" key="2">
    <source>
        <dbReference type="PROSITE-ProRule" id="PRU00556"/>
    </source>
</evidence>
<evidence type="ECO:0000256" key="3">
    <source>
        <dbReference type="SAM" id="MobiDB-lite"/>
    </source>
</evidence>
<evidence type="ECO:0000305" key="4"/>
<feature type="signal peptide" evidence="1">
    <location>
        <begin position="1"/>
        <end position="30"/>
    </location>
</feature>
<feature type="chain" id="PRO_0000024750" description="Probable outer membrane protein pmp21">
    <location>
        <begin position="31"/>
        <end position="1609"/>
    </location>
</feature>
<feature type="domain" description="Autotransporter" evidence="2">
    <location>
        <begin position="1328"/>
        <end position="1609"/>
    </location>
</feature>
<feature type="region of interest" description="Disordered" evidence="3">
    <location>
        <begin position="132"/>
        <end position="183"/>
    </location>
</feature>
<feature type="region of interest" description="Disordered" evidence="3">
    <location>
        <begin position="640"/>
        <end position="677"/>
    </location>
</feature>
<feature type="compositionally biased region" description="Polar residues" evidence="3">
    <location>
        <begin position="132"/>
        <end position="145"/>
    </location>
</feature>
<feature type="compositionally biased region" description="Basic and acidic residues" evidence="3">
    <location>
        <begin position="149"/>
        <end position="175"/>
    </location>
</feature>
<feature type="compositionally biased region" description="Basic and acidic residues" evidence="3">
    <location>
        <begin position="651"/>
        <end position="672"/>
    </location>
</feature>
<feature type="sequence conflict" description="In Ref. 3; BAA99171." evidence="4" ref="3">
    <original>I</original>
    <variation>M</variation>
    <location>
        <position position="420"/>
    </location>
</feature>
<dbReference type="EMBL" id="AE001363">
    <property type="protein sequence ID" value="AAD19099.1"/>
    <property type="molecule type" value="Genomic_DNA"/>
</dbReference>
<dbReference type="EMBL" id="AE002161">
    <property type="protein sequence ID" value="AAF38684.1"/>
    <property type="molecule type" value="Genomic_DNA"/>
</dbReference>
<dbReference type="EMBL" id="BA000008">
    <property type="protein sequence ID" value="BAA99171.1"/>
    <property type="molecule type" value="Genomic_DNA"/>
</dbReference>
<dbReference type="EMBL" id="AE009440">
    <property type="protein sequence ID" value="AAP98929.1"/>
    <property type="status" value="ALT_INIT"/>
    <property type="molecule type" value="Genomic_DNA"/>
</dbReference>
<dbReference type="PIR" id="A86611">
    <property type="entry name" value="A86611"/>
</dbReference>
<dbReference type="PIR" id="H72013">
    <property type="entry name" value="H72013"/>
</dbReference>
<dbReference type="RefSeq" id="NP_225156.1">
    <property type="nucleotide sequence ID" value="NC_000922.1"/>
</dbReference>
<dbReference type="RefSeq" id="WP_010883596.1">
    <property type="nucleotide sequence ID" value="NZ_LN847257.1"/>
</dbReference>
<dbReference type="STRING" id="406984.CPK_ORF00378"/>
<dbReference type="GeneID" id="45051020"/>
<dbReference type="KEGG" id="cpa:CP_0897"/>
<dbReference type="KEGG" id="cpj:pmp_21"/>
<dbReference type="KEGG" id="cpn:CPn_0963"/>
<dbReference type="KEGG" id="cpt:CpB1000"/>
<dbReference type="PATRIC" id="fig|115713.3.peg.1054"/>
<dbReference type="eggNOG" id="COG3210">
    <property type="taxonomic scope" value="Bacteria"/>
</dbReference>
<dbReference type="eggNOG" id="COG4625">
    <property type="taxonomic scope" value="Bacteria"/>
</dbReference>
<dbReference type="HOGENOM" id="CLU_247701_0_0_0"/>
<dbReference type="OrthoDB" id="19123at2"/>
<dbReference type="Proteomes" id="UP000000583">
    <property type="component" value="Chromosome"/>
</dbReference>
<dbReference type="Proteomes" id="UP000000801">
    <property type="component" value="Chromosome"/>
</dbReference>
<dbReference type="GO" id="GO:0009279">
    <property type="term" value="C:cell outer membrane"/>
    <property type="evidence" value="ECO:0007669"/>
    <property type="project" value="UniProtKB-SubCell"/>
</dbReference>
<dbReference type="GO" id="GO:0005576">
    <property type="term" value="C:extracellular region"/>
    <property type="evidence" value="ECO:0007669"/>
    <property type="project" value="UniProtKB-KW"/>
</dbReference>
<dbReference type="Gene3D" id="2.40.128.130">
    <property type="entry name" value="Autotransporter beta-domain"/>
    <property type="match status" value="1"/>
</dbReference>
<dbReference type="InterPro" id="IPR005546">
    <property type="entry name" value="Autotransporte_beta"/>
</dbReference>
<dbReference type="InterPro" id="IPR036709">
    <property type="entry name" value="Autotransporte_beta_dom_sf"/>
</dbReference>
<dbReference type="InterPro" id="IPR011427">
    <property type="entry name" value="Polymorphic_membr_middle"/>
</dbReference>
<dbReference type="InterPro" id="IPR003368">
    <property type="entry name" value="POMP_repeat"/>
</dbReference>
<dbReference type="NCBIfam" id="TIGR01376">
    <property type="entry name" value="POMP_repeat"/>
    <property type="match status" value="3"/>
</dbReference>
<dbReference type="Pfam" id="PF03797">
    <property type="entry name" value="Autotransporter"/>
    <property type="match status" value="1"/>
</dbReference>
<dbReference type="Pfam" id="PF02415">
    <property type="entry name" value="Chlam_PMP"/>
    <property type="match status" value="1"/>
</dbReference>
<dbReference type="Pfam" id="PF07548">
    <property type="entry name" value="ChlamPMP_M"/>
    <property type="match status" value="1"/>
</dbReference>
<dbReference type="SMART" id="SM00869">
    <property type="entry name" value="Autotransporter"/>
    <property type="match status" value="1"/>
</dbReference>
<dbReference type="SUPFAM" id="SSF103515">
    <property type="entry name" value="Autotransporter"/>
    <property type="match status" value="1"/>
</dbReference>
<dbReference type="PROSITE" id="PS51208">
    <property type="entry name" value="AUTOTRANSPORTER"/>
    <property type="match status" value="1"/>
</dbReference>
<comment type="subcellular location">
    <subcellularLocation>
        <location>Secreted</location>
        <location>Cell wall</location>
    </subcellularLocation>
    <subcellularLocation>
        <location evidence="4">Cell outer membrane</location>
        <topology evidence="4">Peripheral membrane protein</topology>
        <orientation evidence="4">Extracellular side</orientation>
    </subcellularLocation>
</comment>
<comment type="developmental stage">
    <text>Elementary body.</text>
</comment>
<comment type="similarity">
    <text evidence="4">Belongs to the PMP outer membrane protein family.</text>
</comment>
<comment type="sequence caution" evidence="4">
    <conflict type="erroneous initiation">
        <sequence resource="EMBL-CDS" id="AAP98929"/>
    </conflict>
</comment>